<organism>
    <name type="scientific">Schizosaccharomyces pombe (strain 972 / ATCC 24843)</name>
    <name type="common">Fission yeast</name>
    <dbReference type="NCBI Taxonomy" id="284812"/>
    <lineage>
        <taxon>Eukaryota</taxon>
        <taxon>Fungi</taxon>
        <taxon>Dikarya</taxon>
        <taxon>Ascomycota</taxon>
        <taxon>Taphrinomycotina</taxon>
        <taxon>Schizosaccharomycetes</taxon>
        <taxon>Schizosaccharomycetales</taxon>
        <taxon>Schizosaccharomycetaceae</taxon>
        <taxon>Schizosaccharomyces</taxon>
    </lineage>
</organism>
<reference key="1">
    <citation type="journal article" date="2002" name="Nature">
        <title>The genome sequence of Schizosaccharomyces pombe.</title>
        <authorList>
            <person name="Wood V."/>
            <person name="Gwilliam R."/>
            <person name="Rajandream M.A."/>
            <person name="Lyne M.H."/>
            <person name="Lyne R."/>
            <person name="Stewart A."/>
            <person name="Sgouros J.G."/>
            <person name="Peat N."/>
            <person name="Hayles J."/>
            <person name="Baker S.G."/>
            <person name="Basham D."/>
            <person name="Bowman S."/>
            <person name="Brooks K."/>
            <person name="Brown D."/>
            <person name="Brown S."/>
            <person name="Chillingworth T."/>
            <person name="Churcher C.M."/>
            <person name="Collins M."/>
            <person name="Connor R."/>
            <person name="Cronin A."/>
            <person name="Davis P."/>
            <person name="Feltwell T."/>
            <person name="Fraser A."/>
            <person name="Gentles S."/>
            <person name="Goble A."/>
            <person name="Hamlin N."/>
            <person name="Harris D.E."/>
            <person name="Hidalgo J."/>
            <person name="Hodgson G."/>
            <person name="Holroyd S."/>
            <person name="Hornsby T."/>
            <person name="Howarth S."/>
            <person name="Huckle E.J."/>
            <person name="Hunt S."/>
            <person name="Jagels K."/>
            <person name="James K.D."/>
            <person name="Jones L."/>
            <person name="Jones M."/>
            <person name="Leather S."/>
            <person name="McDonald S."/>
            <person name="McLean J."/>
            <person name="Mooney P."/>
            <person name="Moule S."/>
            <person name="Mungall K.L."/>
            <person name="Murphy L.D."/>
            <person name="Niblett D."/>
            <person name="Odell C."/>
            <person name="Oliver K."/>
            <person name="O'Neil S."/>
            <person name="Pearson D."/>
            <person name="Quail M.A."/>
            <person name="Rabbinowitsch E."/>
            <person name="Rutherford K.M."/>
            <person name="Rutter S."/>
            <person name="Saunders D."/>
            <person name="Seeger K."/>
            <person name="Sharp S."/>
            <person name="Skelton J."/>
            <person name="Simmonds M.N."/>
            <person name="Squares R."/>
            <person name="Squares S."/>
            <person name="Stevens K."/>
            <person name="Taylor K."/>
            <person name="Taylor R.G."/>
            <person name="Tivey A."/>
            <person name="Walsh S.V."/>
            <person name="Warren T."/>
            <person name="Whitehead S."/>
            <person name="Woodward J.R."/>
            <person name="Volckaert G."/>
            <person name="Aert R."/>
            <person name="Robben J."/>
            <person name="Grymonprez B."/>
            <person name="Weltjens I."/>
            <person name="Vanstreels E."/>
            <person name="Rieger M."/>
            <person name="Schaefer M."/>
            <person name="Mueller-Auer S."/>
            <person name="Gabel C."/>
            <person name="Fuchs M."/>
            <person name="Duesterhoeft A."/>
            <person name="Fritzc C."/>
            <person name="Holzer E."/>
            <person name="Moestl D."/>
            <person name="Hilbert H."/>
            <person name="Borzym K."/>
            <person name="Langer I."/>
            <person name="Beck A."/>
            <person name="Lehrach H."/>
            <person name="Reinhardt R."/>
            <person name="Pohl T.M."/>
            <person name="Eger P."/>
            <person name="Zimmermann W."/>
            <person name="Wedler H."/>
            <person name="Wambutt R."/>
            <person name="Purnelle B."/>
            <person name="Goffeau A."/>
            <person name="Cadieu E."/>
            <person name="Dreano S."/>
            <person name="Gloux S."/>
            <person name="Lelaure V."/>
            <person name="Mottier S."/>
            <person name="Galibert F."/>
            <person name="Aves S.J."/>
            <person name="Xiang Z."/>
            <person name="Hunt C."/>
            <person name="Moore K."/>
            <person name="Hurst S.M."/>
            <person name="Lucas M."/>
            <person name="Rochet M."/>
            <person name="Gaillardin C."/>
            <person name="Tallada V.A."/>
            <person name="Garzon A."/>
            <person name="Thode G."/>
            <person name="Daga R.R."/>
            <person name="Cruzado L."/>
            <person name="Jimenez J."/>
            <person name="Sanchez M."/>
            <person name="del Rey F."/>
            <person name="Benito J."/>
            <person name="Dominguez A."/>
            <person name="Revuelta J.L."/>
            <person name="Moreno S."/>
            <person name="Armstrong J."/>
            <person name="Forsburg S.L."/>
            <person name="Cerutti L."/>
            <person name="Lowe T."/>
            <person name="McCombie W.R."/>
            <person name="Paulsen I."/>
            <person name="Potashkin J."/>
            <person name="Shpakovski G.V."/>
            <person name="Ussery D."/>
            <person name="Barrell B.G."/>
            <person name="Nurse P."/>
        </authorList>
    </citation>
    <scope>NUCLEOTIDE SEQUENCE [LARGE SCALE GENOMIC DNA]</scope>
    <source>
        <strain>972 / ATCC 24843</strain>
    </source>
</reference>
<reference key="2">
    <citation type="journal article" date="2006" name="Nat. Biotechnol.">
        <title>ORFeome cloning and global analysis of protein localization in the fission yeast Schizosaccharomyces pombe.</title>
        <authorList>
            <person name="Matsuyama A."/>
            <person name="Arai R."/>
            <person name="Yashiroda Y."/>
            <person name="Shirai A."/>
            <person name="Kamata A."/>
            <person name="Sekido S."/>
            <person name="Kobayashi Y."/>
            <person name="Hashimoto A."/>
            <person name="Hamamoto M."/>
            <person name="Hiraoka Y."/>
            <person name="Horinouchi S."/>
            <person name="Yoshida M."/>
        </authorList>
    </citation>
    <scope>IDENTIFICATION OF FRAMESHIFT</scope>
    <scope>SUBCELLULAR LOCATION [LARGE SCALE ANALYSIS]</scope>
    <source>
        <strain>972 / ATCC 24843</strain>
        <strain>JY3</strain>
    </source>
</reference>
<dbReference type="EMBL" id="CU329670">
    <property type="protein sequence ID" value="CAB16233.3"/>
    <property type="status" value="ALT_FRAME"/>
    <property type="molecule type" value="Genomic_DNA"/>
</dbReference>
<dbReference type="PIR" id="T38297">
    <property type="entry name" value="T38297"/>
</dbReference>
<dbReference type="RefSeq" id="NP_593794.2">
    <property type="nucleotide sequence ID" value="NM_001019223.2"/>
</dbReference>
<dbReference type="BioGRID" id="278269">
    <property type="interactions" value="1"/>
</dbReference>
<dbReference type="iPTMnet" id="O13938"/>
<dbReference type="PaxDb" id="4896-SPAC23H3.04.1"/>
<dbReference type="EnsemblFungi" id="SPAC23H3.04.1">
    <property type="protein sequence ID" value="SPAC23H3.04.1:pep"/>
    <property type="gene ID" value="SPAC23H3.04"/>
</dbReference>
<dbReference type="KEGG" id="spo:2541775"/>
<dbReference type="PomBase" id="SPAC23H3.04"/>
<dbReference type="VEuPathDB" id="FungiDB:SPAC23H3.04"/>
<dbReference type="eggNOG" id="ENOG502RXYE">
    <property type="taxonomic scope" value="Eukaryota"/>
</dbReference>
<dbReference type="HOGENOM" id="CLU_029564_0_0_1"/>
<dbReference type="InParanoid" id="O13938"/>
<dbReference type="OMA" id="FWTRREN"/>
<dbReference type="PhylomeDB" id="O13938"/>
<dbReference type="PRO" id="PR:O13938"/>
<dbReference type="Proteomes" id="UP000002485">
    <property type="component" value="Chromosome I"/>
</dbReference>
<dbReference type="GO" id="GO:0005794">
    <property type="term" value="C:Golgi apparatus"/>
    <property type="evidence" value="ECO:0007005"/>
    <property type="project" value="PomBase"/>
</dbReference>
<dbReference type="GO" id="GO:0000139">
    <property type="term" value="C:Golgi membrane"/>
    <property type="evidence" value="ECO:0007669"/>
    <property type="project" value="UniProtKB-SubCell"/>
</dbReference>
<dbReference type="GO" id="GO:0005886">
    <property type="term" value="C:plasma membrane"/>
    <property type="evidence" value="ECO:0000303"/>
    <property type="project" value="PomBase"/>
</dbReference>
<dbReference type="InterPro" id="IPR040410">
    <property type="entry name" value="UPF0658_Golgi"/>
</dbReference>
<dbReference type="PANTHER" id="PTHR34391">
    <property type="entry name" value="UPF0658 GOLGI APPARATUS MEMBRANE PROTEIN C1952.10C-RELATED"/>
    <property type="match status" value="1"/>
</dbReference>
<dbReference type="PANTHER" id="PTHR34391:SF1">
    <property type="entry name" value="UPF0658 GOLGI APPARATUS MEMBRANE PROTEIN C1952.10C-RELATED"/>
    <property type="match status" value="1"/>
</dbReference>
<feature type="chain" id="PRO_0000351424" description="UPF0658 Golgi apparatus membrane protein C23H3.04">
    <location>
        <begin position="1"/>
        <end position="353"/>
    </location>
</feature>
<feature type="transmembrane region" description="Helical" evidence="1">
    <location>
        <begin position="39"/>
        <end position="59"/>
    </location>
</feature>
<feature type="transmembrane region" description="Helical" evidence="1">
    <location>
        <begin position="76"/>
        <end position="96"/>
    </location>
</feature>
<feature type="transmembrane region" description="Helical" evidence="1">
    <location>
        <begin position="103"/>
        <end position="123"/>
    </location>
</feature>
<feature type="transmembrane region" description="Helical" evidence="1">
    <location>
        <begin position="172"/>
        <end position="192"/>
    </location>
</feature>
<feature type="transmembrane region" description="Helical" evidence="1">
    <location>
        <begin position="226"/>
        <end position="246"/>
    </location>
</feature>
<feature type="transmembrane region" description="Helical" evidence="1">
    <location>
        <begin position="249"/>
        <end position="269"/>
    </location>
</feature>
<feature type="transmembrane region" description="Helical" evidence="1">
    <location>
        <begin position="281"/>
        <end position="301"/>
    </location>
</feature>
<feature type="transmembrane region" description="Helical" evidence="1">
    <location>
        <begin position="318"/>
        <end position="338"/>
    </location>
</feature>
<sequence>MFWDFKHRIEQSVTNFRETTYEAFSRCKLFLKTLPKTSIFFLTVIILECLLIICFEGYCIGQFRTVELLKNLGIDSLPISLTLFIFACFFILYLCVEALSSKNIIEIIGLLCIHVALFIYSIVQISELAEIQKVFLSKTQSSLNPITLILNRHEAGNEGIYFILEVPKRIKPFLIALPVILGVASVMLGFLAHGMNKAYGWVIYKKIGPELRMRRRYLVYKIYVTLLKIDIYFFLGVTVQYVMVLPEDAVVEFVLTILVLPLTVLILTLSFNSVSSENMFLMMTVQFFYVCGIPYILFKIIRMYTSTQKEYYASSKQMITTFSVITLLLLLFTIAIGFACSHNFKKGLKEYCM</sequence>
<name>YEP4_SCHPO</name>
<keyword id="KW-0333">Golgi apparatus</keyword>
<keyword id="KW-0472">Membrane</keyword>
<keyword id="KW-1185">Reference proteome</keyword>
<keyword id="KW-0812">Transmembrane</keyword>
<keyword id="KW-1133">Transmembrane helix</keyword>
<gene>
    <name type="ORF">SPAC23H3.04</name>
</gene>
<comment type="subcellular location">
    <subcellularLocation>
        <location evidence="2">Golgi apparatus membrane</location>
        <topology evidence="2">Multi-pass membrane protein</topology>
    </subcellularLocation>
</comment>
<comment type="similarity">
    <text evidence="2">Belongs to the UPF0658 family.</text>
</comment>
<comment type="sequence caution" evidence="2">
    <conflict type="frameshift">
        <sequence resource="EMBL-CDS" id="CAB16233"/>
    </conflict>
</comment>
<proteinExistence type="inferred from homology"/>
<protein>
    <recommendedName>
        <fullName>UPF0658 Golgi apparatus membrane protein C23H3.04</fullName>
    </recommendedName>
</protein>
<accession>O13938</accession>
<evidence type="ECO:0000255" key="1"/>
<evidence type="ECO:0000305" key="2"/>